<sequence length="173" mass="19538">MAEKRNIFLVGPMGAGKSTIGRQLAQQLNMEFYDSDQEIEKRTGADVGWVFDLEGEEGFRDREEKVINELTEKQGIVLATGGGSVKSRETRNRLSARGVVVYLETTIEKQLARTQRDKKRPLLHVETPPREVLEALANERNPLYEEIADVTIRTDDQSAKVVANQIIHMLESN</sequence>
<accession>Q3YWN3</accession>
<organism>
    <name type="scientific">Shigella sonnei (strain Ss046)</name>
    <dbReference type="NCBI Taxonomy" id="300269"/>
    <lineage>
        <taxon>Bacteria</taxon>
        <taxon>Pseudomonadati</taxon>
        <taxon>Pseudomonadota</taxon>
        <taxon>Gammaproteobacteria</taxon>
        <taxon>Enterobacterales</taxon>
        <taxon>Enterobacteriaceae</taxon>
        <taxon>Shigella</taxon>
    </lineage>
</organism>
<keyword id="KW-0028">Amino-acid biosynthesis</keyword>
<keyword id="KW-0057">Aromatic amino acid biosynthesis</keyword>
<keyword id="KW-0067">ATP-binding</keyword>
<keyword id="KW-0963">Cytoplasm</keyword>
<keyword id="KW-0418">Kinase</keyword>
<keyword id="KW-0460">Magnesium</keyword>
<keyword id="KW-0479">Metal-binding</keyword>
<keyword id="KW-0547">Nucleotide-binding</keyword>
<keyword id="KW-1185">Reference proteome</keyword>
<keyword id="KW-0808">Transferase</keyword>
<reference key="1">
    <citation type="journal article" date="2005" name="Nucleic Acids Res.">
        <title>Genome dynamics and diversity of Shigella species, the etiologic agents of bacillary dysentery.</title>
        <authorList>
            <person name="Yang F."/>
            <person name="Yang J."/>
            <person name="Zhang X."/>
            <person name="Chen L."/>
            <person name="Jiang Y."/>
            <person name="Yan Y."/>
            <person name="Tang X."/>
            <person name="Wang J."/>
            <person name="Xiong Z."/>
            <person name="Dong J."/>
            <person name="Xue Y."/>
            <person name="Zhu Y."/>
            <person name="Xu X."/>
            <person name="Sun L."/>
            <person name="Chen S."/>
            <person name="Nie H."/>
            <person name="Peng J."/>
            <person name="Xu J."/>
            <person name="Wang Y."/>
            <person name="Yuan Z."/>
            <person name="Wen Y."/>
            <person name="Yao Z."/>
            <person name="Shen Y."/>
            <person name="Qiang B."/>
            <person name="Hou Y."/>
            <person name="Yu J."/>
            <person name="Jin Q."/>
        </authorList>
    </citation>
    <scope>NUCLEOTIDE SEQUENCE [LARGE SCALE GENOMIC DNA]</scope>
    <source>
        <strain>Ss046</strain>
    </source>
</reference>
<evidence type="ECO:0000255" key="1">
    <source>
        <dbReference type="HAMAP-Rule" id="MF_00109"/>
    </source>
</evidence>
<gene>
    <name evidence="1" type="primary">aroK</name>
    <name type="ordered locus">SSON_3521</name>
</gene>
<protein>
    <recommendedName>
        <fullName evidence="1">Shikimate kinase 1</fullName>
        <shortName evidence="1">SK 1</shortName>
        <ecNumber evidence="1">2.7.1.71</ecNumber>
    </recommendedName>
</protein>
<comment type="function">
    <text evidence="1">Catalyzes the specific phosphorylation of the 3-hydroxyl group of shikimic acid using ATP as a cosubstrate.</text>
</comment>
<comment type="catalytic activity">
    <reaction evidence="1">
        <text>shikimate + ATP = 3-phosphoshikimate + ADP + H(+)</text>
        <dbReference type="Rhea" id="RHEA:13121"/>
        <dbReference type="ChEBI" id="CHEBI:15378"/>
        <dbReference type="ChEBI" id="CHEBI:30616"/>
        <dbReference type="ChEBI" id="CHEBI:36208"/>
        <dbReference type="ChEBI" id="CHEBI:145989"/>
        <dbReference type="ChEBI" id="CHEBI:456216"/>
        <dbReference type="EC" id="2.7.1.71"/>
    </reaction>
</comment>
<comment type="cofactor">
    <cofactor evidence="1">
        <name>Mg(2+)</name>
        <dbReference type="ChEBI" id="CHEBI:18420"/>
    </cofactor>
    <text evidence="1">Binds 1 Mg(2+) ion per subunit.</text>
</comment>
<comment type="pathway">
    <text evidence="1">Metabolic intermediate biosynthesis; chorismate biosynthesis; chorismate from D-erythrose 4-phosphate and phosphoenolpyruvate: step 5/7.</text>
</comment>
<comment type="subunit">
    <text evidence="1">Monomer.</text>
</comment>
<comment type="subcellular location">
    <subcellularLocation>
        <location evidence="1">Cytoplasm</location>
    </subcellularLocation>
</comment>
<comment type="similarity">
    <text evidence="1">Belongs to the shikimate kinase family.</text>
</comment>
<proteinExistence type="inferred from homology"/>
<dbReference type="EC" id="2.7.1.71" evidence="1"/>
<dbReference type="EMBL" id="CP000038">
    <property type="protein sequence ID" value="AAZ90079.1"/>
    <property type="molecule type" value="Genomic_DNA"/>
</dbReference>
<dbReference type="RefSeq" id="WP_000818618.1">
    <property type="nucleotide sequence ID" value="NC_007384.1"/>
</dbReference>
<dbReference type="SMR" id="Q3YWN3"/>
<dbReference type="GeneID" id="93778608"/>
<dbReference type="KEGG" id="ssn:SSON_3521"/>
<dbReference type="HOGENOM" id="CLU_057607_2_2_6"/>
<dbReference type="UniPathway" id="UPA00053">
    <property type="reaction ID" value="UER00088"/>
</dbReference>
<dbReference type="Proteomes" id="UP000002529">
    <property type="component" value="Chromosome"/>
</dbReference>
<dbReference type="GO" id="GO:0005829">
    <property type="term" value="C:cytosol"/>
    <property type="evidence" value="ECO:0007669"/>
    <property type="project" value="TreeGrafter"/>
</dbReference>
<dbReference type="GO" id="GO:0005524">
    <property type="term" value="F:ATP binding"/>
    <property type="evidence" value="ECO:0007669"/>
    <property type="project" value="UniProtKB-UniRule"/>
</dbReference>
<dbReference type="GO" id="GO:0000287">
    <property type="term" value="F:magnesium ion binding"/>
    <property type="evidence" value="ECO:0007669"/>
    <property type="project" value="UniProtKB-UniRule"/>
</dbReference>
<dbReference type="GO" id="GO:0004765">
    <property type="term" value="F:shikimate kinase activity"/>
    <property type="evidence" value="ECO:0007669"/>
    <property type="project" value="UniProtKB-UniRule"/>
</dbReference>
<dbReference type="GO" id="GO:0008652">
    <property type="term" value="P:amino acid biosynthetic process"/>
    <property type="evidence" value="ECO:0007669"/>
    <property type="project" value="UniProtKB-KW"/>
</dbReference>
<dbReference type="GO" id="GO:0009073">
    <property type="term" value="P:aromatic amino acid family biosynthetic process"/>
    <property type="evidence" value="ECO:0007669"/>
    <property type="project" value="UniProtKB-KW"/>
</dbReference>
<dbReference type="GO" id="GO:0009423">
    <property type="term" value="P:chorismate biosynthetic process"/>
    <property type="evidence" value="ECO:0007669"/>
    <property type="project" value="UniProtKB-UniRule"/>
</dbReference>
<dbReference type="CDD" id="cd00464">
    <property type="entry name" value="SK"/>
    <property type="match status" value="1"/>
</dbReference>
<dbReference type="FunFam" id="3.40.50.300:FF:000099">
    <property type="entry name" value="Shikimate kinase 1"/>
    <property type="match status" value="1"/>
</dbReference>
<dbReference type="Gene3D" id="3.40.50.300">
    <property type="entry name" value="P-loop containing nucleotide triphosphate hydrolases"/>
    <property type="match status" value="1"/>
</dbReference>
<dbReference type="HAMAP" id="MF_00109">
    <property type="entry name" value="Shikimate_kinase"/>
    <property type="match status" value="1"/>
</dbReference>
<dbReference type="InterPro" id="IPR027417">
    <property type="entry name" value="P-loop_NTPase"/>
</dbReference>
<dbReference type="InterPro" id="IPR031322">
    <property type="entry name" value="Shikimate/glucono_kinase"/>
</dbReference>
<dbReference type="InterPro" id="IPR000623">
    <property type="entry name" value="Shikimate_kinase/TSH1"/>
</dbReference>
<dbReference type="InterPro" id="IPR023000">
    <property type="entry name" value="Shikimate_kinase_CS"/>
</dbReference>
<dbReference type="NCBIfam" id="NF003456">
    <property type="entry name" value="PRK05057.1"/>
    <property type="match status" value="1"/>
</dbReference>
<dbReference type="PANTHER" id="PTHR21087">
    <property type="entry name" value="SHIKIMATE KINASE"/>
    <property type="match status" value="1"/>
</dbReference>
<dbReference type="PANTHER" id="PTHR21087:SF16">
    <property type="entry name" value="SHIKIMATE KINASE 1, CHLOROPLASTIC"/>
    <property type="match status" value="1"/>
</dbReference>
<dbReference type="Pfam" id="PF01202">
    <property type="entry name" value="SKI"/>
    <property type="match status" value="1"/>
</dbReference>
<dbReference type="PRINTS" id="PR01100">
    <property type="entry name" value="SHIKIMTKNASE"/>
</dbReference>
<dbReference type="SUPFAM" id="SSF52540">
    <property type="entry name" value="P-loop containing nucleoside triphosphate hydrolases"/>
    <property type="match status" value="1"/>
</dbReference>
<dbReference type="PROSITE" id="PS01128">
    <property type="entry name" value="SHIKIMATE_KINASE"/>
    <property type="match status" value="1"/>
</dbReference>
<feature type="chain" id="PRO_0000237934" description="Shikimate kinase 1">
    <location>
        <begin position="1"/>
        <end position="173"/>
    </location>
</feature>
<feature type="binding site" evidence="1">
    <location>
        <begin position="14"/>
        <end position="19"/>
    </location>
    <ligand>
        <name>ATP</name>
        <dbReference type="ChEBI" id="CHEBI:30616"/>
    </ligand>
</feature>
<feature type="binding site" evidence="1">
    <location>
        <position position="18"/>
    </location>
    <ligand>
        <name>Mg(2+)</name>
        <dbReference type="ChEBI" id="CHEBI:18420"/>
    </ligand>
</feature>
<feature type="binding site" evidence="1">
    <location>
        <position position="36"/>
    </location>
    <ligand>
        <name>substrate</name>
    </ligand>
</feature>
<feature type="binding site" evidence="1">
    <location>
        <position position="60"/>
    </location>
    <ligand>
        <name>substrate</name>
    </ligand>
</feature>
<feature type="binding site" evidence="1">
    <location>
        <position position="82"/>
    </location>
    <ligand>
        <name>substrate</name>
    </ligand>
</feature>
<feature type="binding site" evidence="1">
    <location>
        <position position="120"/>
    </location>
    <ligand>
        <name>ATP</name>
        <dbReference type="ChEBI" id="CHEBI:30616"/>
    </ligand>
</feature>
<feature type="binding site" evidence="1">
    <location>
        <position position="140"/>
    </location>
    <ligand>
        <name>substrate</name>
    </ligand>
</feature>
<feature type="binding site" evidence="1">
    <location>
        <position position="157"/>
    </location>
    <ligand>
        <name>ATP</name>
        <dbReference type="ChEBI" id="CHEBI:30616"/>
    </ligand>
</feature>
<name>AROK_SHISS</name>